<evidence type="ECO:0000255" key="1">
    <source>
        <dbReference type="HAMAP-Rule" id="MF_00303"/>
    </source>
</evidence>
<sequence>MQVSVETTQGLGRRVTITVAADSIEKAVKSELVKAAKNVRIDGFRKGHVPMNIVEQRYGASVRQDVLGDLMQRNFVDAIIKEKINPAGAPNYVPGEYKQGEDFTYSVEFEVYPEVELKDLESIEVEKPVVEVNDADVDTMLETLRKQQATWKETDAAATAEDRATLDFTGSIDGEEFEGGKATDFVLAMGQGRMIPGFEEGVIGHKAGEEFTIDVNFPEDYHAENLKGKSAKFAIVLKKVEVRELPELTEEFIKRFGVADGSLAGLRAEVRKNMERELKGAVRNRVKTQAIDGLVSANNIDVPTALVDGEIDVLRRQAAQRFGGNEKQAAELPRELFEEQAKRRVVVGLLLGEVISQHELKADEDRVKALIEEMASAYEDPQEVIEFYSKNKELMNNMRNVALEEQAVETLLAKAKVTEKPTTFSELMNQTTAA</sequence>
<feature type="chain" id="PRO_0000179471" description="Trigger factor">
    <location>
        <begin position="1"/>
        <end position="434"/>
    </location>
</feature>
<feature type="domain" description="PPIase FKBP-type" evidence="1">
    <location>
        <begin position="161"/>
        <end position="246"/>
    </location>
</feature>
<proteinExistence type="inferred from homology"/>
<organism>
    <name type="scientific">Yersinia pseudotuberculosis serotype I (strain IP32953)</name>
    <dbReference type="NCBI Taxonomy" id="273123"/>
    <lineage>
        <taxon>Bacteria</taxon>
        <taxon>Pseudomonadati</taxon>
        <taxon>Pseudomonadota</taxon>
        <taxon>Gammaproteobacteria</taxon>
        <taxon>Enterobacterales</taxon>
        <taxon>Yersiniaceae</taxon>
        <taxon>Yersinia</taxon>
    </lineage>
</organism>
<protein>
    <recommendedName>
        <fullName evidence="1">Trigger factor</fullName>
        <shortName evidence="1">TF</shortName>
        <ecNumber evidence="1">5.2.1.8</ecNumber>
    </recommendedName>
    <alternativeName>
        <fullName evidence="1">PPIase</fullName>
    </alternativeName>
</protein>
<comment type="function">
    <text evidence="1">Involved in protein export. Acts as a chaperone by maintaining the newly synthesized protein in an open conformation. Functions as a peptidyl-prolyl cis-trans isomerase.</text>
</comment>
<comment type="catalytic activity">
    <reaction evidence="1">
        <text>[protein]-peptidylproline (omega=180) = [protein]-peptidylproline (omega=0)</text>
        <dbReference type="Rhea" id="RHEA:16237"/>
        <dbReference type="Rhea" id="RHEA-COMP:10747"/>
        <dbReference type="Rhea" id="RHEA-COMP:10748"/>
        <dbReference type="ChEBI" id="CHEBI:83833"/>
        <dbReference type="ChEBI" id="CHEBI:83834"/>
        <dbReference type="EC" id="5.2.1.8"/>
    </reaction>
</comment>
<comment type="subcellular location">
    <subcellularLocation>
        <location>Cytoplasm</location>
    </subcellularLocation>
    <text evidence="1">About half TF is bound to the ribosome near the polypeptide exit tunnel while the other half is free in the cytoplasm.</text>
</comment>
<comment type="domain">
    <text evidence="1">Consists of 3 domains; the N-terminus binds the ribosome, the middle domain has PPIase activity, while the C-terminus has intrinsic chaperone activity on its own.</text>
</comment>
<comment type="similarity">
    <text evidence="1">Belongs to the FKBP-type PPIase family. Tig subfamily.</text>
</comment>
<keyword id="KW-0131">Cell cycle</keyword>
<keyword id="KW-0132">Cell division</keyword>
<keyword id="KW-0143">Chaperone</keyword>
<keyword id="KW-0963">Cytoplasm</keyword>
<keyword id="KW-0413">Isomerase</keyword>
<keyword id="KW-0697">Rotamase</keyword>
<accession>Q66DT5</accession>
<reference key="1">
    <citation type="journal article" date="2004" name="Proc. Natl. Acad. Sci. U.S.A.">
        <title>Insights into the evolution of Yersinia pestis through whole-genome comparison with Yersinia pseudotuberculosis.</title>
        <authorList>
            <person name="Chain P.S.G."/>
            <person name="Carniel E."/>
            <person name="Larimer F.W."/>
            <person name="Lamerdin J."/>
            <person name="Stoutland P.O."/>
            <person name="Regala W.M."/>
            <person name="Georgescu A.M."/>
            <person name="Vergez L.M."/>
            <person name="Land M.L."/>
            <person name="Motin V.L."/>
            <person name="Brubaker R.R."/>
            <person name="Fowler J."/>
            <person name="Hinnebusch J."/>
            <person name="Marceau M."/>
            <person name="Medigue C."/>
            <person name="Simonet M."/>
            <person name="Chenal-Francisque V."/>
            <person name="Souza B."/>
            <person name="Dacheux D."/>
            <person name="Elliott J.M."/>
            <person name="Derbise A."/>
            <person name="Hauser L.J."/>
            <person name="Garcia E."/>
        </authorList>
    </citation>
    <scope>NUCLEOTIDE SEQUENCE [LARGE SCALE GENOMIC DNA]</scope>
    <source>
        <strain>IP32953</strain>
    </source>
</reference>
<gene>
    <name evidence="1" type="primary">tig</name>
    <name type="ordered locus">YPTB0958</name>
</gene>
<dbReference type="EC" id="5.2.1.8" evidence="1"/>
<dbReference type="EMBL" id="BX936398">
    <property type="protein sequence ID" value="CAH20198.1"/>
    <property type="molecule type" value="Genomic_DNA"/>
</dbReference>
<dbReference type="RefSeq" id="WP_002208643.1">
    <property type="nucleotide sequence ID" value="NZ_CP009712.1"/>
</dbReference>
<dbReference type="SMR" id="Q66DT5"/>
<dbReference type="GeneID" id="57975553"/>
<dbReference type="KEGG" id="ypo:BZ17_1589"/>
<dbReference type="KEGG" id="yps:YPTB0958"/>
<dbReference type="PATRIC" id="fig|273123.14.peg.1686"/>
<dbReference type="Proteomes" id="UP000001011">
    <property type="component" value="Chromosome"/>
</dbReference>
<dbReference type="GO" id="GO:0005737">
    <property type="term" value="C:cytoplasm"/>
    <property type="evidence" value="ECO:0007669"/>
    <property type="project" value="UniProtKB-SubCell"/>
</dbReference>
<dbReference type="GO" id="GO:0003755">
    <property type="term" value="F:peptidyl-prolyl cis-trans isomerase activity"/>
    <property type="evidence" value="ECO:0007669"/>
    <property type="project" value="UniProtKB-UniRule"/>
</dbReference>
<dbReference type="GO" id="GO:0044183">
    <property type="term" value="F:protein folding chaperone"/>
    <property type="evidence" value="ECO:0007669"/>
    <property type="project" value="TreeGrafter"/>
</dbReference>
<dbReference type="GO" id="GO:0043022">
    <property type="term" value="F:ribosome binding"/>
    <property type="evidence" value="ECO:0007669"/>
    <property type="project" value="TreeGrafter"/>
</dbReference>
<dbReference type="GO" id="GO:0051083">
    <property type="term" value="P:'de novo' cotranslational protein folding"/>
    <property type="evidence" value="ECO:0007669"/>
    <property type="project" value="TreeGrafter"/>
</dbReference>
<dbReference type="GO" id="GO:0051301">
    <property type="term" value="P:cell division"/>
    <property type="evidence" value="ECO:0007669"/>
    <property type="project" value="UniProtKB-KW"/>
</dbReference>
<dbReference type="GO" id="GO:0061077">
    <property type="term" value="P:chaperone-mediated protein folding"/>
    <property type="evidence" value="ECO:0007669"/>
    <property type="project" value="TreeGrafter"/>
</dbReference>
<dbReference type="GO" id="GO:0015031">
    <property type="term" value="P:protein transport"/>
    <property type="evidence" value="ECO:0007669"/>
    <property type="project" value="UniProtKB-UniRule"/>
</dbReference>
<dbReference type="GO" id="GO:0043335">
    <property type="term" value="P:protein unfolding"/>
    <property type="evidence" value="ECO:0007669"/>
    <property type="project" value="TreeGrafter"/>
</dbReference>
<dbReference type="FunFam" id="1.10.3120.10:FF:000001">
    <property type="entry name" value="Trigger factor"/>
    <property type="match status" value="1"/>
</dbReference>
<dbReference type="FunFam" id="3.10.50.40:FF:000001">
    <property type="entry name" value="Trigger factor"/>
    <property type="match status" value="1"/>
</dbReference>
<dbReference type="FunFam" id="3.30.70.1050:FF:000001">
    <property type="entry name" value="Trigger factor"/>
    <property type="match status" value="1"/>
</dbReference>
<dbReference type="Gene3D" id="3.10.50.40">
    <property type="match status" value="1"/>
</dbReference>
<dbReference type="Gene3D" id="3.30.70.1050">
    <property type="entry name" value="Trigger factor ribosome-binding domain"/>
    <property type="match status" value="1"/>
</dbReference>
<dbReference type="Gene3D" id="1.10.3120.10">
    <property type="entry name" value="Trigger factor, C-terminal domain"/>
    <property type="match status" value="1"/>
</dbReference>
<dbReference type="HAMAP" id="MF_00303">
    <property type="entry name" value="Trigger_factor_Tig"/>
    <property type="match status" value="1"/>
</dbReference>
<dbReference type="InterPro" id="IPR046357">
    <property type="entry name" value="PPIase_dom_sf"/>
</dbReference>
<dbReference type="InterPro" id="IPR001179">
    <property type="entry name" value="PPIase_FKBP_dom"/>
</dbReference>
<dbReference type="InterPro" id="IPR005215">
    <property type="entry name" value="Trig_fac"/>
</dbReference>
<dbReference type="InterPro" id="IPR008880">
    <property type="entry name" value="Trigger_fac_C"/>
</dbReference>
<dbReference type="InterPro" id="IPR037041">
    <property type="entry name" value="Trigger_fac_C_sf"/>
</dbReference>
<dbReference type="InterPro" id="IPR008881">
    <property type="entry name" value="Trigger_fac_ribosome-bd_bac"/>
</dbReference>
<dbReference type="InterPro" id="IPR036611">
    <property type="entry name" value="Trigger_fac_ribosome-bd_sf"/>
</dbReference>
<dbReference type="InterPro" id="IPR027304">
    <property type="entry name" value="Trigger_fact/SurA_dom_sf"/>
</dbReference>
<dbReference type="NCBIfam" id="TIGR00115">
    <property type="entry name" value="tig"/>
    <property type="match status" value="1"/>
</dbReference>
<dbReference type="PANTHER" id="PTHR30560">
    <property type="entry name" value="TRIGGER FACTOR CHAPERONE AND PEPTIDYL-PROLYL CIS/TRANS ISOMERASE"/>
    <property type="match status" value="1"/>
</dbReference>
<dbReference type="PANTHER" id="PTHR30560:SF3">
    <property type="entry name" value="TRIGGER FACTOR-LIKE PROTEIN TIG, CHLOROPLASTIC"/>
    <property type="match status" value="1"/>
</dbReference>
<dbReference type="Pfam" id="PF00254">
    <property type="entry name" value="FKBP_C"/>
    <property type="match status" value="1"/>
</dbReference>
<dbReference type="Pfam" id="PF05698">
    <property type="entry name" value="Trigger_C"/>
    <property type="match status" value="1"/>
</dbReference>
<dbReference type="Pfam" id="PF05697">
    <property type="entry name" value="Trigger_N"/>
    <property type="match status" value="1"/>
</dbReference>
<dbReference type="PIRSF" id="PIRSF003095">
    <property type="entry name" value="Trigger_factor"/>
    <property type="match status" value="1"/>
</dbReference>
<dbReference type="SUPFAM" id="SSF54534">
    <property type="entry name" value="FKBP-like"/>
    <property type="match status" value="1"/>
</dbReference>
<dbReference type="SUPFAM" id="SSF109998">
    <property type="entry name" value="Triger factor/SurA peptide-binding domain-like"/>
    <property type="match status" value="1"/>
</dbReference>
<dbReference type="SUPFAM" id="SSF102735">
    <property type="entry name" value="Trigger factor ribosome-binding domain"/>
    <property type="match status" value="1"/>
</dbReference>
<dbReference type="PROSITE" id="PS50059">
    <property type="entry name" value="FKBP_PPIASE"/>
    <property type="match status" value="1"/>
</dbReference>
<name>TIG_YERPS</name>